<protein>
    <recommendedName>
        <fullName evidence="1">Small ribosomal subunit protein eS4</fullName>
    </recommendedName>
    <alternativeName>
        <fullName evidence="2">30S ribosomal protein S4e</fullName>
    </alternativeName>
</protein>
<proteinExistence type="inferred from homology"/>
<feature type="chain" id="PRO_1000081342" description="Small ribosomal subunit protein eS4">
    <location>
        <begin position="1"/>
        <end position="241"/>
    </location>
</feature>
<feature type="domain" description="S4 RNA-binding" evidence="1">
    <location>
        <begin position="37"/>
        <end position="99"/>
    </location>
</feature>
<organism>
    <name type="scientific">Metallosphaera sedula (strain ATCC 51363 / DSM 5348 / JCM 9185 / NBRC 15509 / TH2)</name>
    <dbReference type="NCBI Taxonomy" id="399549"/>
    <lineage>
        <taxon>Archaea</taxon>
        <taxon>Thermoproteota</taxon>
        <taxon>Thermoprotei</taxon>
        <taxon>Sulfolobales</taxon>
        <taxon>Sulfolobaceae</taxon>
        <taxon>Metallosphaera</taxon>
    </lineage>
</organism>
<dbReference type="EMBL" id="CP000682">
    <property type="protein sequence ID" value="ABP94280.1"/>
    <property type="molecule type" value="Genomic_DNA"/>
</dbReference>
<dbReference type="RefSeq" id="WP_011921249.1">
    <property type="nucleotide sequence ID" value="NZ_CP139956.1"/>
</dbReference>
<dbReference type="SMR" id="A4YCX8"/>
<dbReference type="STRING" id="399549.Msed_0103"/>
<dbReference type="KEGG" id="mse:Msed_0103"/>
<dbReference type="eggNOG" id="arCOG04093">
    <property type="taxonomic scope" value="Archaea"/>
</dbReference>
<dbReference type="HOGENOM" id="CLU_060400_0_0_2"/>
<dbReference type="Proteomes" id="UP000000242">
    <property type="component" value="Chromosome"/>
</dbReference>
<dbReference type="GO" id="GO:0022627">
    <property type="term" value="C:cytosolic small ribosomal subunit"/>
    <property type="evidence" value="ECO:0007669"/>
    <property type="project" value="TreeGrafter"/>
</dbReference>
<dbReference type="GO" id="GO:0019843">
    <property type="term" value="F:rRNA binding"/>
    <property type="evidence" value="ECO:0007669"/>
    <property type="project" value="UniProtKB-KW"/>
</dbReference>
<dbReference type="GO" id="GO:0003735">
    <property type="term" value="F:structural constituent of ribosome"/>
    <property type="evidence" value="ECO:0007669"/>
    <property type="project" value="InterPro"/>
</dbReference>
<dbReference type="GO" id="GO:0006412">
    <property type="term" value="P:translation"/>
    <property type="evidence" value="ECO:0007669"/>
    <property type="project" value="UniProtKB-UniRule"/>
</dbReference>
<dbReference type="CDD" id="cd06087">
    <property type="entry name" value="KOW_RPS4"/>
    <property type="match status" value="1"/>
</dbReference>
<dbReference type="CDD" id="cd00165">
    <property type="entry name" value="S4"/>
    <property type="match status" value="1"/>
</dbReference>
<dbReference type="FunFam" id="3.10.290.10:FF:000002">
    <property type="entry name" value="40S ribosomal protein S4"/>
    <property type="match status" value="1"/>
</dbReference>
<dbReference type="Gene3D" id="2.30.30.30">
    <property type="match status" value="1"/>
</dbReference>
<dbReference type="Gene3D" id="2.40.50.740">
    <property type="match status" value="1"/>
</dbReference>
<dbReference type="Gene3D" id="3.10.290.10">
    <property type="entry name" value="RNA-binding S4 domain"/>
    <property type="match status" value="1"/>
</dbReference>
<dbReference type="HAMAP" id="MF_00485">
    <property type="entry name" value="Ribosomal_eS4"/>
    <property type="match status" value="1"/>
</dbReference>
<dbReference type="InterPro" id="IPR014722">
    <property type="entry name" value="Rib_uL2_dom2"/>
</dbReference>
<dbReference type="InterPro" id="IPR000876">
    <property type="entry name" value="Ribosomal_eS4"/>
</dbReference>
<dbReference type="InterPro" id="IPR013845">
    <property type="entry name" value="Ribosomal_eS4_central_region"/>
</dbReference>
<dbReference type="InterPro" id="IPR038237">
    <property type="entry name" value="Ribosomal_eS4_central_sf"/>
</dbReference>
<dbReference type="InterPro" id="IPR041982">
    <property type="entry name" value="Ribosomal_eS4_KOW"/>
</dbReference>
<dbReference type="InterPro" id="IPR013843">
    <property type="entry name" value="Ribosomal_eS4_N"/>
</dbReference>
<dbReference type="InterPro" id="IPR002942">
    <property type="entry name" value="S4_RNA-bd"/>
</dbReference>
<dbReference type="InterPro" id="IPR036986">
    <property type="entry name" value="S4_RNA-bd_sf"/>
</dbReference>
<dbReference type="NCBIfam" id="NF003312">
    <property type="entry name" value="PRK04313.1"/>
    <property type="match status" value="1"/>
</dbReference>
<dbReference type="PANTHER" id="PTHR11581">
    <property type="entry name" value="30S/40S RIBOSOMAL PROTEIN S4"/>
    <property type="match status" value="1"/>
</dbReference>
<dbReference type="PANTHER" id="PTHR11581:SF0">
    <property type="entry name" value="SMALL RIBOSOMAL SUBUNIT PROTEIN ES4"/>
    <property type="match status" value="1"/>
</dbReference>
<dbReference type="Pfam" id="PF00900">
    <property type="entry name" value="Ribosomal_S4e"/>
    <property type="match status" value="1"/>
</dbReference>
<dbReference type="Pfam" id="PF08071">
    <property type="entry name" value="RS4NT"/>
    <property type="match status" value="1"/>
</dbReference>
<dbReference type="Pfam" id="PF01479">
    <property type="entry name" value="S4"/>
    <property type="match status" value="1"/>
</dbReference>
<dbReference type="PIRSF" id="PIRSF002116">
    <property type="entry name" value="Ribosomal_S4"/>
    <property type="match status" value="1"/>
</dbReference>
<dbReference type="SMART" id="SM00363">
    <property type="entry name" value="S4"/>
    <property type="match status" value="1"/>
</dbReference>
<dbReference type="SUPFAM" id="SSF55174">
    <property type="entry name" value="Alpha-L RNA-binding motif"/>
    <property type="match status" value="1"/>
</dbReference>
<dbReference type="PROSITE" id="PS50889">
    <property type="entry name" value="S4"/>
    <property type="match status" value="1"/>
</dbReference>
<sequence length="241" mass="27295">MTHITRLEAPWFLRASKKEYKWTVRASPGPHPLGKSIPLGLLLRDYLAFTSSLKESKKIISDGKVLVDGRVRRDYKYPVGLMDVIAIPHADLYLRIVPDRARLLKPVKISEEESKFKLVRLLNKTLVKGGLLQFNLEDGRNLLISKESTEMFKLPTLTTLKISIPNQEILGVYGFKENVYVMAVGGKNAGIIGQLKRIQTSPYKTRRYSIVVIRSPDGSEYETNLENAMVIGEEKPEVKVE</sequence>
<keyword id="KW-1185">Reference proteome</keyword>
<keyword id="KW-0687">Ribonucleoprotein</keyword>
<keyword id="KW-0689">Ribosomal protein</keyword>
<keyword id="KW-0694">RNA-binding</keyword>
<keyword id="KW-0699">rRNA-binding</keyword>
<accession>A4YCX8</accession>
<evidence type="ECO:0000255" key="1">
    <source>
        <dbReference type="HAMAP-Rule" id="MF_00485"/>
    </source>
</evidence>
<evidence type="ECO:0000305" key="2"/>
<comment type="similarity">
    <text evidence="1">Belongs to the eukaryotic ribosomal protein eS4 family.</text>
</comment>
<gene>
    <name evidence="1" type="primary">rps4e</name>
    <name type="ordered locus">Msed_0103</name>
</gene>
<reference key="1">
    <citation type="journal article" date="2008" name="Appl. Environ. Microbiol.">
        <title>The genome sequence of the metal-mobilizing, extremely thermoacidophilic archaeon Metallosphaera sedula provides insights into bioleaching-associated metabolism.</title>
        <authorList>
            <person name="Auernik K.S."/>
            <person name="Maezato Y."/>
            <person name="Blum P.H."/>
            <person name="Kelly R.M."/>
        </authorList>
    </citation>
    <scope>NUCLEOTIDE SEQUENCE [LARGE SCALE GENOMIC DNA]</scope>
    <source>
        <strain>ATCC 51363 / DSM 5348 / JCM 9185 / NBRC 15509 / TH2</strain>
    </source>
</reference>
<name>RS4E_METS5</name>